<name>RBL_VERBO</name>
<reference key="1">
    <citation type="journal article" date="1993" name="Ann. Mo. Bot. Gard.">
        <title>A parsimony analysis of the Asteridae sensu lato based on rbcL sequences.</title>
        <authorList>
            <person name="Olmstead R.G."/>
            <person name="Bremer B."/>
            <person name="Scott K.M."/>
            <person name="Palmer J.D."/>
        </authorList>
        <dbReference type="AGRICOLA" id="IND93053816"/>
    </citation>
    <scope>NUCLEOTIDE SEQUENCE [GENOMIC DNA]</scope>
</reference>
<feature type="chain" id="PRO_0000062609" description="Ribulose bisphosphate carboxylase large chain">
    <location>
        <begin position="1" status="less than"/>
        <end position="443"/>
    </location>
</feature>
<feature type="active site" description="Proton acceptor" evidence="1">
    <location>
        <position position="141"/>
    </location>
</feature>
<feature type="active site" description="Proton acceptor" evidence="1">
    <location>
        <position position="260"/>
    </location>
</feature>
<feature type="binding site" description="in homodimeric partner" evidence="1">
    <location>
        <position position="89"/>
    </location>
    <ligand>
        <name>substrate</name>
    </ligand>
</feature>
<feature type="binding site" evidence="1">
    <location>
        <position position="139"/>
    </location>
    <ligand>
        <name>substrate</name>
    </ligand>
</feature>
<feature type="binding site" evidence="1">
    <location>
        <position position="143"/>
    </location>
    <ligand>
        <name>substrate</name>
    </ligand>
</feature>
<feature type="binding site" description="via carbamate group" evidence="1">
    <location>
        <position position="167"/>
    </location>
    <ligand>
        <name>Mg(2+)</name>
        <dbReference type="ChEBI" id="CHEBI:18420"/>
    </ligand>
</feature>
<feature type="binding site" evidence="1">
    <location>
        <position position="169"/>
    </location>
    <ligand>
        <name>Mg(2+)</name>
        <dbReference type="ChEBI" id="CHEBI:18420"/>
    </ligand>
</feature>
<feature type="binding site" evidence="1">
    <location>
        <position position="170"/>
    </location>
    <ligand>
        <name>Mg(2+)</name>
        <dbReference type="ChEBI" id="CHEBI:18420"/>
    </ligand>
</feature>
<feature type="binding site" evidence="1">
    <location>
        <position position="261"/>
    </location>
    <ligand>
        <name>substrate</name>
    </ligand>
</feature>
<feature type="binding site" evidence="1">
    <location>
        <position position="293"/>
    </location>
    <ligand>
        <name>substrate</name>
    </ligand>
</feature>
<feature type="binding site" evidence="1">
    <location>
        <position position="345"/>
    </location>
    <ligand>
        <name>substrate</name>
    </ligand>
</feature>
<feature type="site" description="Transition state stabilizer" evidence="1">
    <location>
        <position position="300"/>
    </location>
</feature>
<feature type="modified residue" description="N6-carboxylysine" evidence="1">
    <location>
        <position position="167"/>
    </location>
</feature>
<feature type="disulfide bond" description="Interchain; in linked form" evidence="1">
    <location>
        <position position="213"/>
    </location>
</feature>
<feature type="non-terminal residue">
    <location>
        <position position="1"/>
    </location>
</feature>
<comment type="function">
    <text evidence="1">RuBisCO catalyzes two reactions: the carboxylation of D-ribulose 1,5-bisphosphate, the primary event in carbon dioxide fixation, as well as the oxidative fragmentation of the pentose substrate in the photorespiration process. Both reactions occur simultaneously and in competition at the same active site.</text>
</comment>
<comment type="catalytic activity">
    <reaction evidence="1">
        <text>2 (2R)-3-phosphoglycerate + 2 H(+) = D-ribulose 1,5-bisphosphate + CO2 + H2O</text>
        <dbReference type="Rhea" id="RHEA:23124"/>
        <dbReference type="ChEBI" id="CHEBI:15377"/>
        <dbReference type="ChEBI" id="CHEBI:15378"/>
        <dbReference type="ChEBI" id="CHEBI:16526"/>
        <dbReference type="ChEBI" id="CHEBI:57870"/>
        <dbReference type="ChEBI" id="CHEBI:58272"/>
        <dbReference type="EC" id="4.1.1.39"/>
    </reaction>
</comment>
<comment type="catalytic activity">
    <reaction evidence="1">
        <text>D-ribulose 1,5-bisphosphate + O2 = 2-phosphoglycolate + (2R)-3-phosphoglycerate + 2 H(+)</text>
        <dbReference type="Rhea" id="RHEA:36631"/>
        <dbReference type="ChEBI" id="CHEBI:15378"/>
        <dbReference type="ChEBI" id="CHEBI:15379"/>
        <dbReference type="ChEBI" id="CHEBI:57870"/>
        <dbReference type="ChEBI" id="CHEBI:58033"/>
        <dbReference type="ChEBI" id="CHEBI:58272"/>
    </reaction>
</comment>
<comment type="cofactor">
    <cofactor evidence="1">
        <name>Mg(2+)</name>
        <dbReference type="ChEBI" id="CHEBI:18420"/>
    </cofactor>
    <text evidence="1">Binds 1 Mg(2+) ion per subunit.</text>
</comment>
<comment type="subunit">
    <text evidence="1">Heterohexadecamer of 8 large chains and 8 small chains; disulfide-linked. The disulfide link is formed within the large subunit homodimers.</text>
</comment>
<comment type="subcellular location">
    <subcellularLocation>
        <location>Plastid</location>
        <location>Chloroplast</location>
    </subcellularLocation>
</comment>
<comment type="PTM">
    <text evidence="1">The disulfide bond which can form in the large chain dimeric partners within the hexadecamer appears to be associated with oxidative stress and protein turnover.</text>
</comment>
<comment type="miscellaneous">
    <text evidence="1">The basic functional RuBisCO is composed of a large chain homodimer in a 'head-to-tail' conformation. In form I RuBisCO this homodimer is arranged in a barrel-like tetramer with the small subunits forming a tetrameric 'cap' on each end of the 'barrel'.</text>
</comment>
<comment type="similarity">
    <text evidence="1">Belongs to the RuBisCO large chain family. Type I subfamily.</text>
</comment>
<dbReference type="EC" id="4.1.1.39" evidence="1"/>
<dbReference type="EMBL" id="L14412">
    <property type="protein sequence ID" value="AAA19773.1"/>
    <property type="molecule type" value="Genomic_DNA"/>
</dbReference>
<dbReference type="GO" id="GO:0009507">
    <property type="term" value="C:chloroplast"/>
    <property type="evidence" value="ECO:0007669"/>
    <property type="project" value="UniProtKB-SubCell"/>
</dbReference>
<dbReference type="GO" id="GO:0000287">
    <property type="term" value="F:magnesium ion binding"/>
    <property type="evidence" value="ECO:0007669"/>
    <property type="project" value="InterPro"/>
</dbReference>
<dbReference type="GO" id="GO:0004497">
    <property type="term" value="F:monooxygenase activity"/>
    <property type="evidence" value="ECO:0007669"/>
    <property type="project" value="UniProtKB-KW"/>
</dbReference>
<dbReference type="GO" id="GO:0016984">
    <property type="term" value="F:ribulose-bisphosphate carboxylase activity"/>
    <property type="evidence" value="ECO:0007669"/>
    <property type="project" value="UniProtKB-EC"/>
</dbReference>
<dbReference type="GO" id="GO:0009853">
    <property type="term" value="P:photorespiration"/>
    <property type="evidence" value="ECO:0007669"/>
    <property type="project" value="UniProtKB-KW"/>
</dbReference>
<dbReference type="GO" id="GO:0019253">
    <property type="term" value="P:reductive pentose-phosphate cycle"/>
    <property type="evidence" value="ECO:0007669"/>
    <property type="project" value="UniProtKB-KW"/>
</dbReference>
<dbReference type="CDD" id="cd08212">
    <property type="entry name" value="RuBisCO_large_I"/>
    <property type="match status" value="1"/>
</dbReference>
<dbReference type="FunFam" id="3.20.20.110:FF:000001">
    <property type="entry name" value="Ribulose bisphosphate carboxylase large chain"/>
    <property type="match status" value="1"/>
</dbReference>
<dbReference type="Gene3D" id="3.20.20.110">
    <property type="entry name" value="Ribulose bisphosphate carboxylase, large subunit, C-terminal domain"/>
    <property type="match status" value="1"/>
</dbReference>
<dbReference type="Gene3D" id="3.30.70.150">
    <property type="entry name" value="RuBisCO large subunit, N-terminal domain"/>
    <property type="match status" value="1"/>
</dbReference>
<dbReference type="HAMAP" id="MF_01338">
    <property type="entry name" value="RuBisCO_L_type1"/>
    <property type="match status" value="1"/>
</dbReference>
<dbReference type="InterPro" id="IPR033966">
    <property type="entry name" value="RuBisCO"/>
</dbReference>
<dbReference type="InterPro" id="IPR020878">
    <property type="entry name" value="RuBisCo_large_chain_AS"/>
</dbReference>
<dbReference type="InterPro" id="IPR000685">
    <property type="entry name" value="RuBisCO_lsu_C"/>
</dbReference>
<dbReference type="InterPro" id="IPR036376">
    <property type="entry name" value="RuBisCO_lsu_C_sf"/>
</dbReference>
<dbReference type="InterPro" id="IPR017443">
    <property type="entry name" value="RuBisCO_lsu_fd_N"/>
</dbReference>
<dbReference type="InterPro" id="IPR036422">
    <property type="entry name" value="RuBisCO_lsu_N_sf"/>
</dbReference>
<dbReference type="InterPro" id="IPR020888">
    <property type="entry name" value="RuBisCO_lsuI"/>
</dbReference>
<dbReference type="NCBIfam" id="NF003252">
    <property type="entry name" value="PRK04208.1"/>
    <property type="match status" value="1"/>
</dbReference>
<dbReference type="PANTHER" id="PTHR42704">
    <property type="entry name" value="RIBULOSE BISPHOSPHATE CARBOXYLASE"/>
    <property type="match status" value="1"/>
</dbReference>
<dbReference type="PANTHER" id="PTHR42704:SF15">
    <property type="entry name" value="RIBULOSE BISPHOSPHATE CARBOXYLASE LARGE CHAIN"/>
    <property type="match status" value="1"/>
</dbReference>
<dbReference type="Pfam" id="PF00016">
    <property type="entry name" value="RuBisCO_large"/>
    <property type="match status" value="1"/>
</dbReference>
<dbReference type="Pfam" id="PF02788">
    <property type="entry name" value="RuBisCO_large_N"/>
    <property type="match status" value="1"/>
</dbReference>
<dbReference type="SFLD" id="SFLDG01052">
    <property type="entry name" value="RuBisCO"/>
    <property type="match status" value="1"/>
</dbReference>
<dbReference type="SFLD" id="SFLDS00014">
    <property type="entry name" value="RuBisCO"/>
    <property type="match status" value="1"/>
</dbReference>
<dbReference type="SFLD" id="SFLDG00301">
    <property type="entry name" value="RuBisCO-like_proteins"/>
    <property type="match status" value="1"/>
</dbReference>
<dbReference type="SUPFAM" id="SSF51649">
    <property type="entry name" value="RuBisCo, C-terminal domain"/>
    <property type="match status" value="1"/>
</dbReference>
<dbReference type="SUPFAM" id="SSF54966">
    <property type="entry name" value="RuBisCO, large subunit, small (N-terminal) domain"/>
    <property type="match status" value="1"/>
</dbReference>
<dbReference type="PROSITE" id="PS00157">
    <property type="entry name" value="RUBISCO_LARGE"/>
    <property type="match status" value="1"/>
</dbReference>
<protein>
    <recommendedName>
        <fullName evidence="1">Ribulose bisphosphate carboxylase large chain</fullName>
        <shortName evidence="1">RuBisCO large subunit</shortName>
        <ecNumber evidence="1">4.1.1.39</ecNumber>
    </recommendedName>
</protein>
<evidence type="ECO:0000255" key="1">
    <source>
        <dbReference type="HAMAP-Rule" id="MF_01338"/>
    </source>
</evidence>
<gene>
    <name evidence="1" type="primary">rbcL</name>
</gene>
<proteinExistence type="inferred from homology"/>
<organism>
    <name type="scientific">Verbena bonariensis</name>
    <name type="common">Argentinian vervain</name>
    <dbReference type="NCBI Taxonomy" id="28516"/>
    <lineage>
        <taxon>Eukaryota</taxon>
        <taxon>Viridiplantae</taxon>
        <taxon>Streptophyta</taxon>
        <taxon>Embryophyta</taxon>
        <taxon>Tracheophyta</taxon>
        <taxon>Spermatophyta</taxon>
        <taxon>Magnoliopsida</taxon>
        <taxon>eudicotyledons</taxon>
        <taxon>Gunneridae</taxon>
        <taxon>Pentapetalae</taxon>
        <taxon>asterids</taxon>
        <taxon>lamiids</taxon>
        <taxon>Lamiales</taxon>
        <taxon>Verbenaceae</taxon>
        <taxon>Verbeneae</taxon>
        <taxon>Verbena</taxon>
    </lineage>
</organism>
<geneLocation type="chloroplast"/>
<keyword id="KW-0113">Calvin cycle</keyword>
<keyword id="KW-0120">Carbon dioxide fixation</keyword>
<keyword id="KW-0150">Chloroplast</keyword>
<keyword id="KW-1015">Disulfide bond</keyword>
<keyword id="KW-0456">Lyase</keyword>
<keyword id="KW-0460">Magnesium</keyword>
<keyword id="KW-0479">Metal-binding</keyword>
<keyword id="KW-0503">Monooxygenase</keyword>
<keyword id="KW-0560">Oxidoreductase</keyword>
<keyword id="KW-0601">Photorespiration</keyword>
<keyword id="KW-0602">Photosynthesis</keyword>
<keyword id="KW-0934">Plastid</keyword>
<sequence>DILAAFRVTPQPGVPPEEAGAAVAAESSTGTWTTVWTDGLTSLDRYKGRCYHIEPVPGDPDQYICYVAYPLDLFEEGSXTNMFTSIVGNVFGFKALRVLRLEDLRIPVAYTKTFQGPPHGIQVERDKLNKYGRPLMGCTIKPKLGLSAKNYGRAVYECLRGGLDFTKDDENVNSQPFMRWRDRFLFCAEAIYKAQAETGEIKGHYLNATAGTCEEMMKRAIFARELGVPIVMHDYLTGGFTANTTLAHYCRDNGLLLHIHRAMHAVIDRQKNHGMHFRVLAKALRMSGGDHIHAGTVVGKLEGERDITLGFVDLLRDDYIEKDRSRGIYFTQDWVSLPGVIPVASGGIHVWHMPALTEIFGDDSVLQFGGGTLGHPWGNAPGAVANRVALEACVKARNEGRDLAAEGNVIIREACKWSPELSAACEVWKEIKFEFEAMDTLDK</sequence>
<accession>P36490</accession>